<protein>
    <recommendedName>
        <fullName evidence="1">Large ribosomal subunit protein bL34</fullName>
    </recommendedName>
    <alternativeName>
        <fullName evidence="2">50S ribosomal protein L34</fullName>
    </alternativeName>
</protein>
<keyword id="KW-1185">Reference proteome</keyword>
<keyword id="KW-0687">Ribonucleoprotein</keyword>
<keyword id="KW-0689">Ribosomal protein</keyword>
<reference key="1">
    <citation type="journal article" date="2003" name="Nature">
        <title>Genome divergence in two Prochlorococcus ecotypes reflects oceanic niche differentiation.</title>
        <authorList>
            <person name="Rocap G."/>
            <person name="Larimer F.W."/>
            <person name="Lamerdin J.E."/>
            <person name="Malfatti S."/>
            <person name="Chain P."/>
            <person name="Ahlgren N.A."/>
            <person name="Arellano A."/>
            <person name="Coleman M."/>
            <person name="Hauser L."/>
            <person name="Hess W.R."/>
            <person name="Johnson Z.I."/>
            <person name="Land M.L."/>
            <person name="Lindell D."/>
            <person name="Post A.F."/>
            <person name="Regala W."/>
            <person name="Shah M."/>
            <person name="Shaw S.L."/>
            <person name="Steglich C."/>
            <person name="Sullivan M.B."/>
            <person name="Ting C.S."/>
            <person name="Tolonen A."/>
            <person name="Webb E.A."/>
            <person name="Zinser E.R."/>
            <person name="Chisholm S.W."/>
        </authorList>
    </citation>
    <scope>NUCLEOTIDE SEQUENCE [LARGE SCALE GENOMIC DNA]</scope>
    <source>
        <strain>MIT 9313</strain>
    </source>
</reference>
<comment type="similarity">
    <text evidence="1">Belongs to the bacterial ribosomal protein bL34 family.</text>
</comment>
<evidence type="ECO:0000255" key="1">
    <source>
        <dbReference type="HAMAP-Rule" id="MF_00391"/>
    </source>
</evidence>
<evidence type="ECO:0000305" key="2"/>
<gene>
    <name evidence="1" type="primary">rpmH</name>
    <name evidence="1" type="synonym">rpl34</name>
    <name type="ordered locus">PMT_1368</name>
</gene>
<sequence length="45" mass="5397">MTKRTFGGTSRKRKRVSGFRVRMRNHTGRRVIRSRRKRGRARLAV</sequence>
<accession>Q7V613</accession>
<dbReference type="EMBL" id="BX548175">
    <property type="protein sequence ID" value="CAE21543.1"/>
    <property type="molecule type" value="Genomic_DNA"/>
</dbReference>
<dbReference type="RefSeq" id="WP_011130736.1">
    <property type="nucleotide sequence ID" value="NC_005071.1"/>
</dbReference>
<dbReference type="SMR" id="Q7V613"/>
<dbReference type="KEGG" id="pmt:PMT_1368"/>
<dbReference type="eggNOG" id="COG0230">
    <property type="taxonomic scope" value="Bacteria"/>
</dbReference>
<dbReference type="HOGENOM" id="CLU_129938_2_1_3"/>
<dbReference type="Proteomes" id="UP000001423">
    <property type="component" value="Chromosome"/>
</dbReference>
<dbReference type="GO" id="GO:1990904">
    <property type="term" value="C:ribonucleoprotein complex"/>
    <property type="evidence" value="ECO:0007669"/>
    <property type="project" value="UniProtKB-KW"/>
</dbReference>
<dbReference type="GO" id="GO:0005840">
    <property type="term" value="C:ribosome"/>
    <property type="evidence" value="ECO:0007669"/>
    <property type="project" value="UniProtKB-KW"/>
</dbReference>
<dbReference type="GO" id="GO:0003735">
    <property type="term" value="F:structural constituent of ribosome"/>
    <property type="evidence" value="ECO:0007669"/>
    <property type="project" value="InterPro"/>
</dbReference>
<dbReference type="GO" id="GO:0006412">
    <property type="term" value="P:translation"/>
    <property type="evidence" value="ECO:0007669"/>
    <property type="project" value="UniProtKB-UniRule"/>
</dbReference>
<dbReference type="Gene3D" id="1.10.287.3980">
    <property type="match status" value="1"/>
</dbReference>
<dbReference type="HAMAP" id="MF_00391">
    <property type="entry name" value="Ribosomal_bL34"/>
    <property type="match status" value="1"/>
</dbReference>
<dbReference type="InterPro" id="IPR000271">
    <property type="entry name" value="Ribosomal_bL34"/>
</dbReference>
<dbReference type="InterPro" id="IPR020939">
    <property type="entry name" value="Ribosomal_bL34_CS"/>
</dbReference>
<dbReference type="NCBIfam" id="TIGR01030">
    <property type="entry name" value="rpmH_bact"/>
    <property type="match status" value="1"/>
</dbReference>
<dbReference type="Pfam" id="PF00468">
    <property type="entry name" value="Ribosomal_L34"/>
    <property type="match status" value="1"/>
</dbReference>
<dbReference type="PROSITE" id="PS00784">
    <property type="entry name" value="RIBOSOMAL_L34"/>
    <property type="match status" value="1"/>
</dbReference>
<name>RL34_PROMM</name>
<organism>
    <name type="scientific">Prochlorococcus marinus (strain MIT 9313)</name>
    <dbReference type="NCBI Taxonomy" id="74547"/>
    <lineage>
        <taxon>Bacteria</taxon>
        <taxon>Bacillati</taxon>
        <taxon>Cyanobacteriota</taxon>
        <taxon>Cyanophyceae</taxon>
        <taxon>Synechococcales</taxon>
        <taxon>Prochlorococcaceae</taxon>
        <taxon>Prochlorococcus</taxon>
    </lineage>
</organism>
<feature type="chain" id="PRO_0000187439" description="Large ribosomal subunit protein bL34">
    <location>
        <begin position="1"/>
        <end position="45"/>
    </location>
</feature>
<proteinExistence type="inferred from homology"/>